<accession>B7IYG6</accession>
<dbReference type="EMBL" id="CP001186">
    <property type="protein sequence ID" value="ACK97803.1"/>
    <property type="molecule type" value="Genomic_DNA"/>
</dbReference>
<dbReference type="RefSeq" id="WP_000043947.1">
    <property type="nucleotide sequence ID" value="NC_011772.1"/>
</dbReference>
<dbReference type="SMR" id="B7IYG6"/>
<dbReference type="GeneID" id="72450995"/>
<dbReference type="KEGG" id="bcg:BCG9842_B0804"/>
<dbReference type="HOGENOM" id="CLU_017633_0_7_9"/>
<dbReference type="Proteomes" id="UP000006744">
    <property type="component" value="Chromosome"/>
</dbReference>
<dbReference type="GO" id="GO:0005737">
    <property type="term" value="C:cytoplasm"/>
    <property type="evidence" value="ECO:0007669"/>
    <property type="project" value="UniProtKB-SubCell"/>
</dbReference>
<dbReference type="GO" id="GO:0005524">
    <property type="term" value="F:ATP binding"/>
    <property type="evidence" value="ECO:0007669"/>
    <property type="project" value="InterPro"/>
</dbReference>
<dbReference type="GO" id="GO:0031072">
    <property type="term" value="F:heat shock protein binding"/>
    <property type="evidence" value="ECO:0007669"/>
    <property type="project" value="InterPro"/>
</dbReference>
<dbReference type="GO" id="GO:0051082">
    <property type="term" value="F:unfolded protein binding"/>
    <property type="evidence" value="ECO:0007669"/>
    <property type="project" value="UniProtKB-UniRule"/>
</dbReference>
<dbReference type="GO" id="GO:0008270">
    <property type="term" value="F:zinc ion binding"/>
    <property type="evidence" value="ECO:0007669"/>
    <property type="project" value="UniProtKB-UniRule"/>
</dbReference>
<dbReference type="GO" id="GO:0051085">
    <property type="term" value="P:chaperone cofactor-dependent protein refolding"/>
    <property type="evidence" value="ECO:0007669"/>
    <property type="project" value="TreeGrafter"/>
</dbReference>
<dbReference type="GO" id="GO:0006260">
    <property type="term" value="P:DNA replication"/>
    <property type="evidence" value="ECO:0007669"/>
    <property type="project" value="UniProtKB-KW"/>
</dbReference>
<dbReference type="GO" id="GO:0042026">
    <property type="term" value="P:protein refolding"/>
    <property type="evidence" value="ECO:0007669"/>
    <property type="project" value="TreeGrafter"/>
</dbReference>
<dbReference type="GO" id="GO:0009408">
    <property type="term" value="P:response to heat"/>
    <property type="evidence" value="ECO:0007669"/>
    <property type="project" value="InterPro"/>
</dbReference>
<dbReference type="CDD" id="cd06257">
    <property type="entry name" value="DnaJ"/>
    <property type="match status" value="1"/>
</dbReference>
<dbReference type="CDD" id="cd10747">
    <property type="entry name" value="DnaJ_C"/>
    <property type="match status" value="1"/>
</dbReference>
<dbReference type="CDD" id="cd10719">
    <property type="entry name" value="DnaJ_zf"/>
    <property type="match status" value="1"/>
</dbReference>
<dbReference type="FunFam" id="1.10.287.110:FF:000031">
    <property type="entry name" value="Molecular chaperone DnaJ"/>
    <property type="match status" value="1"/>
</dbReference>
<dbReference type="FunFam" id="2.60.260.20:FF:000004">
    <property type="entry name" value="Molecular chaperone DnaJ"/>
    <property type="match status" value="1"/>
</dbReference>
<dbReference type="FunFam" id="2.60.260.20:FF:000009">
    <property type="entry name" value="Putative Mitochondrial DnaJ chaperone"/>
    <property type="match status" value="1"/>
</dbReference>
<dbReference type="Gene3D" id="6.20.20.10">
    <property type="match status" value="2"/>
</dbReference>
<dbReference type="Gene3D" id="1.10.287.110">
    <property type="entry name" value="DnaJ domain"/>
    <property type="match status" value="1"/>
</dbReference>
<dbReference type="Gene3D" id="2.60.260.20">
    <property type="entry name" value="Urease metallochaperone UreE, N-terminal domain"/>
    <property type="match status" value="2"/>
</dbReference>
<dbReference type="HAMAP" id="MF_01152">
    <property type="entry name" value="DnaJ"/>
    <property type="match status" value="1"/>
</dbReference>
<dbReference type="InterPro" id="IPR012724">
    <property type="entry name" value="DnaJ"/>
</dbReference>
<dbReference type="InterPro" id="IPR002939">
    <property type="entry name" value="DnaJ_C"/>
</dbReference>
<dbReference type="InterPro" id="IPR001623">
    <property type="entry name" value="DnaJ_domain"/>
</dbReference>
<dbReference type="InterPro" id="IPR018253">
    <property type="entry name" value="DnaJ_domain_CS"/>
</dbReference>
<dbReference type="InterPro" id="IPR008971">
    <property type="entry name" value="HSP40/DnaJ_pept-bd"/>
</dbReference>
<dbReference type="InterPro" id="IPR001305">
    <property type="entry name" value="HSP_DnaJ_Cys-rich_dom"/>
</dbReference>
<dbReference type="InterPro" id="IPR036410">
    <property type="entry name" value="HSP_DnaJ_Cys-rich_dom_sf"/>
</dbReference>
<dbReference type="InterPro" id="IPR036869">
    <property type="entry name" value="J_dom_sf"/>
</dbReference>
<dbReference type="NCBIfam" id="TIGR02349">
    <property type="entry name" value="DnaJ_bact"/>
    <property type="match status" value="1"/>
</dbReference>
<dbReference type="NCBIfam" id="NF008035">
    <property type="entry name" value="PRK10767.1"/>
    <property type="match status" value="1"/>
</dbReference>
<dbReference type="NCBIfam" id="NF010873">
    <property type="entry name" value="PRK14280.1"/>
    <property type="match status" value="1"/>
</dbReference>
<dbReference type="PANTHER" id="PTHR43096:SF48">
    <property type="entry name" value="CHAPERONE PROTEIN DNAJ"/>
    <property type="match status" value="1"/>
</dbReference>
<dbReference type="PANTHER" id="PTHR43096">
    <property type="entry name" value="DNAJ HOMOLOG 1, MITOCHONDRIAL-RELATED"/>
    <property type="match status" value="1"/>
</dbReference>
<dbReference type="Pfam" id="PF00226">
    <property type="entry name" value="DnaJ"/>
    <property type="match status" value="1"/>
</dbReference>
<dbReference type="Pfam" id="PF01556">
    <property type="entry name" value="DnaJ_C"/>
    <property type="match status" value="1"/>
</dbReference>
<dbReference type="Pfam" id="PF00684">
    <property type="entry name" value="DnaJ_CXXCXGXG"/>
    <property type="match status" value="1"/>
</dbReference>
<dbReference type="PRINTS" id="PR00625">
    <property type="entry name" value="JDOMAIN"/>
</dbReference>
<dbReference type="SMART" id="SM00271">
    <property type="entry name" value="DnaJ"/>
    <property type="match status" value="1"/>
</dbReference>
<dbReference type="SUPFAM" id="SSF46565">
    <property type="entry name" value="Chaperone J-domain"/>
    <property type="match status" value="1"/>
</dbReference>
<dbReference type="SUPFAM" id="SSF57938">
    <property type="entry name" value="DnaJ/Hsp40 cysteine-rich domain"/>
    <property type="match status" value="1"/>
</dbReference>
<dbReference type="SUPFAM" id="SSF49493">
    <property type="entry name" value="HSP40/DnaJ peptide-binding domain"/>
    <property type="match status" value="2"/>
</dbReference>
<dbReference type="PROSITE" id="PS00636">
    <property type="entry name" value="DNAJ_1"/>
    <property type="match status" value="1"/>
</dbReference>
<dbReference type="PROSITE" id="PS50076">
    <property type="entry name" value="DNAJ_2"/>
    <property type="match status" value="1"/>
</dbReference>
<dbReference type="PROSITE" id="PS51188">
    <property type="entry name" value="ZF_CR"/>
    <property type="match status" value="1"/>
</dbReference>
<protein>
    <recommendedName>
        <fullName evidence="1">Chaperone protein DnaJ</fullName>
    </recommendedName>
</protein>
<organism>
    <name type="scientific">Bacillus cereus (strain G9842)</name>
    <dbReference type="NCBI Taxonomy" id="405531"/>
    <lineage>
        <taxon>Bacteria</taxon>
        <taxon>Bacillati</taxon>
        <taxon>Bacillota</taxon>
        <taxon>Bacilli</taxon>
        <taxon>Bacillales</taxon>
        <taxon>Bacillaceae</taxon>
        <taxon>Bacillus</taxon>
        <taxon>Bacillus cereus group</taxon>
    </lineage>
</organism>
<comment type="function">
    <text evidence="1">Participates actively in the response to hyperosmotic and heat shock by preventing the aggregation of stress-denatured proteins and by disaggregating proteins, also in an autonomous, DnaK-independent fashion. Unfolded proteins bind initially to DnaJ; upon interaction with the DnaJ-bound protein, DnaK hydrolyzes its bound ATP, resulting in the formation of a stable complex. GrpE releases ADP from DnaK; ATP binding to DnaK triggers the release of the substrate protein, thus completing the reaction cycle. Several rounds of ATP-dependent interactions between DnaJ, DnaK and GrpE are required for fully efficient folding. Also involved, together with DnaK and GrpE, in the DNA replication of plasmids through activation of initiation proteins.</text>
</comment>
<comment type="cofactor">
    <cofactor evidence="1">
        <name>Zn(2+)</name>
        <dbReference type="ChEBI" id="CHEBI:29105"/>
    </cofactor>
    <text evidence="1">Binds 2 Zn(2+) ions per monomer.</text>
</comment>
<comment type="subunit">
    <text evidence="1">Homodimer.</text>
</comment>
<comment type="subcellular location">
    <subcellularLocation>
        <location evidence="1">Cytoplasm</location>
    </subcellularLocation>
</comment>
<comment type="domain">
    <text evidence="1">The J domain is necessary and sufficient to stimulate DnaK ATPase activity. Zinc center 1 plays an important role in the autonomous, DnaK-independent chaperone activity of DnaJ. Zinc center 2 is essential for interaction with DnaK and for DnaJ activity.</text>
</comment>
<comment type="similarity">
    <text evidence="1">Belongs to the DnaJ family.</text>
</comment>
<keyword id="KW-0143">Chaperone</keyword>
<keyword id="KW-0963">Cytoplasm</keyword>
<keyword id="KW-0235">DNA replication</keyword>
<keyword id="KW-0479">Metal-binding</keyword>
<keyword id="KW-0677">Repeat</keyword>
<keyword id="KW-0346">Stress response</keyword>
<keyword id="KW-0862">Zinc</keyword>
<keyword id="KW-0863">Zinc-finger</keyword>
<reference key="1">
    <citation type="submission" date="2008-10" db="EMBL/GenBank/DDBJ databases">
        <title>Genome sequence of Bacillus cereus G9842.</title>
        <authorList>
            <person name="Dodson R.J."/>
            <person name="Durkin A.S."/>
            <person name="Rosovitz M.J."/>
            <person name="Rasko D.A."/>
            <person name="Hoffmaster A."/>
            <person name="Ravel J."/>
            <person name="Sutton G."/>
        </authorList>
    </citation>
    <scope>NUCLEOTIDE SEQUENCE [LARGE SCALE GENOMIC DNA]</scope>
    <source>
        <strain>G9842</strain>
    </source>
</reference>
<evidence type="ECO:0000255" key="1">
    <source>
        <dbReference type="HAMAP-Rule" id="MF_01152"/>
    </source>
</evidence>
<gene>
    <name evidence="1" type="primary">dnaJ</name>
    <name type="ordered locus">BCG9842_B0804</name>
</gene>
<proteinExistence type="inferred from homology"/>
<name>DNAJ_BACC2</name>
<sequence>MSKRDYYEVLGLSKGASTDEIKKAYRRLAKKYHPDVSKEENAIEKFKEVQEAYEVLSDDQKRAQYDQFGHAGANQGFGGFGGGGDFGGGFGFEDIFSSFFGGGGGRRRDPNAPRQGADLQYQVTLDFEEAIFGKELNVEIPVEDPCDTCKGSGAKPGTSKETCKHCSGSGQVSVEQNTPFGRIVNRQACGHCSGTGQIIKEKCTTCHGSGKVRKRKKINVKIPAGIDNGQQIRVSGKGEAGVNGGPAGDLYVVVHVRNHEFFEREGDHIICEMPLTFAQMALGDEVEVPTVHGKVKLKIPAGTQTGTEFRLKGKGAPNVRGYGQGDQYVVVRVVVPTKLTSQQKDLLREFAGQEEQDDSLFGKLKRAFKGE</sequence>
<feature type="chain" id="PRO_1000137658" description="Chaperone protein DnaJ">
    <location>
        <begin position="1"/>
        <end position="371"/>
    </location>
</feature>
<feature type="domain" description="J" evidence="1">
    <location>
        <begin position="5"/>
        <end position="69"/>
    </location>
</feature>
<feature type="repeat" description="CXXCXGXG motif">
    <location>
        <begin position="146"/>
        <end position="153"/>
    </location>
</feature>
<feature type="repeat" description="CXXCXGXG motif">
    <location>
        <begin position="163"/>
        <end position="170"/>
    </location>
</feature>
<feature type="repeat" description="CXXCXGXG motif">
    <location>
        <begin position="189"/>
        <end position="196"/>
    </location>
</feature>
<feature type="repeat" description="CXXCXGXG motif">
    <location>
        <begin position="203"/>
        <end position="210"/>
    </location>
</feature>
<feature type="zinc finger region" description="CR-type" evidence="1">
    <location>
        <begin position="133"/>
        <end position="215"/>
    </location>
</feature>
<feature type="binding site" evidence="1">
    <location>
        <position position="146"/>
    </location>
    <ligand>
        <name>Zn(2+)</name>
        <dbReference type="ChEBI" id="CHEBI:29105"/>
        <label>1</label>
    </ligand>
</feature>
<feature type="binding site" evidence="1">
    <location>
        <position position="149"/>
    </location>
    <ligand>
        <name>Zn(2+)</name>
        <dbReference type="ChEBI" id="CHEBI:29105"/>
        <label>1</label>
    </ligand>
</feature>
<feature type="binding site" evidence="1">
    <location>
        <position position="163"/>
    </location>
    <ligand>
        <name>Zn(2+)</name>
        <dbReference type="ChEBI" id="CHEBI:29105"/>
        <label>2</label>
    </ligand>
</feature>
<feature type="binding site" evidence="1">
    <location>
        <position position="166"/>
    </location>
    <ligand>
        <name>Zn(2+)</name>
        <dbReference type="ChEBI" id="CHEBI:29105"/>
        <label>2</label>
    </ligand>
</feature>
<feature type="binding site" evidence="1">
    <location>
        <position position="189"/>
    </location>
    <ligand>
        <name>Zn(2+)</name>
        <dbReference type="ChEBI" id="CHEBI:29105"/>
        <label>2</label>
    </ligand>
</feature>
<feature type="binding site" evidence="1">
    <location>
        <position position="192"/>
    </location>
    <ligand>
        <name>Zn(2+)</name>
        <dbReference type="ChEBI" id="CHEBI:29105"/>
        <label>2</label>
    </ligand>
</feature>
<feature type="binding site" evidence="1">
    <location>
        <position position="203"/>
    </location>
    <ligand>
        <name>Zn(2+)</name>
        <dbReference type="ChEBI" id="CHEBI:29105"/>
        <label>1</label>
    </ligand>
</feature>
<feature type="binding site" evidence="1">
    <location>
        <position position="206"/>
    </location>
    <ligand>
        <name>Zn(2+)</name>
        <dbReference type="ChEBI" id="CHEBI:29105"/>
        <label>1</label>
    </ligand>
</feature>